<accession>Q31G56</accession>
<reference key="1">
    <citation type="journal article" date="2006" name="PLoS Biol.">
        <title>The genome of deep-sea vent chemolithoautotroph Thiomicrospira crunogena XCL-2.</title>
        <authorList>
            <person name="Scott K.M."/>
            <person name="Sievert S.M."/>
            <person name="Abril F.N."/>
            <person name="Ball L.A."/>
            <person name="Barrett C.J."/>
            <person name="Blake R.A."/>
            <person name="Boller A.J."/>
            <person name="Chain P.S.G."/>
            <person name="Clark J.A."/>
            <person name="Davis C.R."/>
            <person name="Detter C."/>
            <person name="Do K.F."/>
            <person name="Dobrinski K.P."/>
            <person name="Faza B.I."/>
            <person name="Fitzpatrick K.A."/>
            <person name="Freyermuth S.K."/>
            <person name="Harmer T.L."/>
            <person name="Hauser L.J."/>
            <person name="Huegler M."/>
            <person name="Kerfeld C.A."/>
            <person name="Klotz M.G."/>
            <person name="Kong W.W."/>
            <person name="Land M."/>
            <person name="Lapidus A."/>
            <person name="Larimer F.W."/>
            <person name="Longo D.L."/>
            <person name="Lucas S."/>
            <person name="Malfatti S.A."/>
            <person name="Massey S.E."/>
            <person name="Martin D.D."/>
            <person name="McCuddin Z."/>
            <person name="Meyer F."/>
            <person name="Moore J.L."/>
            <person name="Ocampo L.H. Jr."/>
            <person name="Paul J.H."/>
            <person name="Paulsen I.T."/>
            <person name="Reep D.K."/>
            <person name="Ren Q."/>
            <person name="Ross R.L."/>
            <person name="Sato P.Y."/>
            <person name="Thomas P."/>
            <person name="Tinkham L.E."/>
            <person name="Zeruth G.T."/>
        </authorList>
    </citation>
    <scope>NUCLEOTIDE SEQUENCE [LARGE SCALE GENOMIC DNA]</scope>
    <source>
        <strain>DSM 25203 / XCL-2</strain>
    </source>
</reference>
<proteinExistence type="inferred from homology"/>
<evidence type="ECO:0000255" key="1">
    <source>
        <dbReference type="HAMAP-Rule" id="MF_00052"/>
    </source>
</evidence>
<evidence type="ECO:0000255" key="2">
    <source>
        <dbReference type="PROSITE-ProRule" id="PRU01319"/>
    </source>
</evidence>
<dbReference type="EC" id="3.1.26.4" evidence="1"/>
<dbReference type="EMBL" id="CP000109">
    <property type="protein sequence ID" value="ABB41867.1"/>
    <property type="molecule type" value="Genomic_DNA"/>
</dbReference>
<dbReference type="SMR" id="Q31G56"/>
<dbReference type="STRING" id="317025.Tcr_1272"/>
<dbReference type="KEGG" id="tcx:Tcr_1272"/>
<dbReference type="eggNOG" id="COG0164">
    <property type="taxonomic scope" value="Bacteria"/>
</dbReference>
<dbReference type="HOGENOM" id="CLU_036532_3_2_6"/>
<dbReference type="OrthoDB" id="9803420at2"/>
<dbReference type="GO" id="GO:0005737">
    <property type="term" value="C:cytoplasm"/>
    <property type="evidence" value="ECO:0007669"/>
    <property type="project" value="UniProtKB-SubCell"/>
</dbReference>
<dbReference type="GO" id="GO:0032299">
    <property type="term" value="C:ribonuclease H2 complex"/>
    <property type="evidence" value="ECO:0007669"/>
    <property type="project" value="TreeGrafter"/>
</dbReference>
<dbReference type="GO" id="GO:0030145">
    <property type="term" value="F:manganese ion binding"/>
    <property type="evidence" value="ECO:0007669"/>
    <property type="project" value="UniProtKB-UniRule"/>
</dbReference>
<dbReference type="GO" id="GO:0003723">
    <property type="term" value="F:RNA binding"/>
    <property type="evidence" value="ECO:0007669"/>
    <property type="project" value="InterPro"/>
</dbReference>
<dbReference type="GO" id="GO:0004523">
    <property type="term" value="F:RNA-DNA hybrid ribonuclease activity"/>
    <property type="evidence" value="ECO:0007669"/>
    <property type="project" value="UniProtKB-UniRule"/>
</dbReference>
<dbReference type="GO" id="GO:0043137">
    <property type="term" value="P:DNA replication, removal of RNA primer"/>
    <property type="evidence" value="ECO:0007669"/>
    <property type="project" value="TreeGrafter"/>
</dbReference>
<dbReference type="GO" id="GO:0006298">
    <property type="term" value="P:mismatch repair"/>
    <property type="evidence" value="ECO:0007669"/>
    <property type="project" value="TreeGrafter"/>
</dbReference>
<dbReference type="CDD" id="cd07182">
    <property type="entry name" value="RNase_HII_bacteria_HII_like"/>
    <property type="match status" value="1"/>
</dbReference>
<dbReference type="FunFam" id="3.30.420.10:FF:000006">
    <property type="entry name" value="Ribonuclease HII"/>
    <property type="match status" value="1"/>
</dbReference>
<dbReference type="Gene3D" id="3.30.420.10">
    <property type="entry name" value="Ribonuclease H-like superfamily/Ribonuclease H"/>
    <property type="match status" value="1"/>
</dbReference>
<dbReference type="HAMAP" id="MF_00052_B">
    <property type="entry name" value="RNase_HII_B"/>
    <property type="match status" value="1"/>
</dbReference>
<dbReference type="InterPro" id="IPR022898">
    <property type="entry name" value="RNase_HII"/>
</dbReference>
<dbReference type="InterPro" id="IPR001352">
    <property type="entry name" value="RNase_HII/HIII"/>
</dbReference>
<dbReference type="InterPro" id="IPR024567">
    <property type="entry name" value="RNase_HII/HIII_dom"/>
</dbReference>
<dbReference type="InterPro" id="IPR012337">
    <property type="entry name" value="RNaseH-like_sf"/>
</dbReference>
<dbReference type="InterPro" id="IPR036397">
    <property type="entry name" value="RNaseH_sf"/>
</dbReference>
<dbReference type="NCBIfam" id="NF000595">
    <property type="entry name" value="PRK00015.1-3"/>
    <property type="match status" value="1"/>
</dbReference>
<dbReference type="NCBIfam" id="NF000596">
    <property type="entry name" value="PRK00015.1-4"/>
    <property type="match status" value="1"/>
</dbReference>
<dbReference type="PANTHER" id="PTHR10954">
    <property type="entry name" value="RIBONUCLEASE H2 SUBUNIT A"/>
    <property type="match status" value="1"/>
</dbReference>
<dbReference type="PANTHER" id="PTHR10954:SF18">
    <property type="entry name" value="RIBONUCLEASE HII"/>
    <property type="match status" value="1"/>
</dbReference>
<dbReference type="Pfam" id="PF01351">
    <property type="entry name" value="RNase_HII"/>
    <property type="match status" value="1"/>
</dbReference>
<dbReference type="SUPFAM" id="SSF53098">
    <property type="entry name" value="Ribonuclease H-like"/>
    <property type="match status" value="1"/>
</dbReference>
<dbReference type="PROSITE" id="PS51975">
    <property type="entry name" value="RNASE_H_2"/>
    <property type="match status" value="1"/>
</dbReference>
<comment type="function">
    <text evidence="1">Endonuclease that specifically degrades the RNA of RNA-DNA hybrids.</text>
</comment>
<comment type="catalytic activity">
    <reaction evidence="1">
        <text>Endonucleolytic cleavage to 5'-phosphomonoester.</text>
        <dbReference type="EC" id="3.1.26.4"/>
    </reaction>
</comment>
<comment type="cofactor">
    <cofactor evidence="1">
        <name>Mn(2+)</name>
        <dbReference type="ChEBI" id="CHEBI:29035"/>
    </cofactor>
    <cofactor evidence="1">
        <name>Mg(2+)</name>
        <dbReference type="ChEBI" id="CHEBI:18420"/>
    </cofactor>
    <text evidence="1">Manganese or magnesium. Binds 1 divalent metal ion per monomer in the absence of substrate. May bind a second metal ion after substrate binding.</text>
</comment>
<comment type="subcellular location">
    <subcellularLocation>
        <location evidence="1">Cytoplasm</location>
    </subcellularLocation>
</comment>
<comment type="similarity">
    <text evidence="1">Belongs to the RNase HII family.</text>
</comment>
<sequence>MTDPQIHLDLMPHGIADEFIVGVDEVGRGPLVGDVVAAAVILPKGCELLLKDSKKLSESKRELIAHQIQQEAIDFCIATASPDEIDSLNILHATMLAMKRAVEGLNNPIKKVLVDGNRCPNVPYECEAIVKGDGKVPVISAASILAKVHRDQQMQVLHEAYPEYGFDAHKGYPTKLHLEKLSQHGLIPGYRRSFKPVKNILQLLEKI</sequence>
<name>RNH2_HYDCU</name>
<gene>
    <name evidence="1" type="primary">rnhB</name>
    <name type="ordered locus">Tcr_1272</name>
</gene>
<organism>
    <name type="scientific">Hydrogenovibrio crunogenus (strain DSM 25203 / XCL-2)</name>
    <name type="common">Thiomicrospira crunogena</name>
    <dbReference type="NCBI Taxonomy" id="317025"/>
    <lineage>
        <taxon>Bacteria</taxon>
        <taxon>Pseudomonadati</taxon>
        <taxon>Pseudomonadota</taxon>
        <taxon>Gammaproteobacteria</taxon>
        <taxon>Thiotrichales</taxon>
        <taxon>Piscirickettsiaceae</taxon>
        <taxon>Hydrogenovibrio</taxon>
    </lineage>
</organism>
<keyword id="KW-0963">Cytoplasm</keyword>
<keyword id="KW-0255">Endonuclease</keyword>
<keyword id="KW-0378">Hydrolase</keyword>
<keyword id="KW-0464">Manganese</keyword>
<keyword id="KW-0479">Metal-binding</keyword>
<keyword id="KW-0540">Nuclease</keyword>
<protein>
    <recommendedName>
        <fullName evidence="1">Ribonuclease HII</fullName>
        <shortName evidence="1">RNase HII</shortName>
        <ecNumber evidence="1">3.1.26.4</ecNumber>
    </recommendedName>
</protein>
<feature type="chain" id="PRO_0000235787" description="Ribonuclease HII">
    <location>
        <begin position="1"/>
        <end position="207"/>
    </location>
</feature>
<feature type="domain" description="RNase H type-2" evidence="2">
    <location>
        <begin position="18"/>
        <end position="206"/>
    </location>
</feature>
<feature type="binding site" evidence="1">
    <location>
        <position position="24"/>
    </location>
    <ligand>
        <name>a divalent metal cation</name>
        <dbReference type="ChEBI" id="CHEBI:60240"/>
    </ligand>
</feature>
<feature type="binding site" evidence="1">
    <location>
        <position position="25"/>
    </location>
    <ligand>
        <name>a divalent metal cation</name>
        <dbReference type="ChEBI" id="CHEBI:60240"/>
    </ligand>
</feature>
<feature type="binding site" evidence="1">
    <location>
        <position position="115"/>
    </location>
    <ligand>
        <name>a divalent metal cation</name>
        <dbReference type="ChEBI" id="CHEBI:60240"/>
    </ligand>
</feature>